<keyword id="KW-0053">Apoptosis</keyword>
<keyword id="KW-0067">ATP-binding</keyword>
<keyword id="KW-0131">Cell cycle</keyword>
<keyword id="KW-0132">Cell division</keyword>
<keyword id="KW-0159">Chromosome partition</keyword>
<keyword id="KW-0963">Cytoplasm</keyword>
<keyword id="KW-0206">Cytoskeleton</keyword>
<keyword id="KW-0418">Kinase</keyword>
<keyword id="KW-0460">Magnesium</keyword>
<keyword id="KW-0479">Metal-binding</keyword>
<keyword id="KW-0498">Mitosis</keyword>
<keyword id="KW-0547">Nucleotide-binding</keyword>
<keyword id="KW-0539">Nucleus</keyword>
<keyword id="KW-0597">Phosphoprotein</keyword>
<keyword id="KW-1185">Reference proteome</keyword>
<keyword id="KW-0723">Serine/threonine-protein kinase</keyword>
<keyword id="KW-0808">Transferase</keyword>
<reference key="1">
    <citation type="journal article" date="2007" name="Genome Res.">
        <title>Fine mapping of a swine quantitative trait locus for number of vertebrae and analysis of an orphan nuclear receptor, germ cell nuclear factor (NR6A1).</title>
        <authorList>
            <person name="Mikawa S."/>
            <person name="Morozumi T."/>
            <person name="Shimanuki S."/>
            <person name="Hayashi T."/>
            <person name="Uenishi H."/>
            <person name="Domukai M."/>
            <person name="Okumura N."/>
            <person name="Awata T."/>
        </authorList>
    </citation>
    <scope>NUCLEOTIDE SEQUENCE [GENOMIC DNA]</scope>
    <source>
        <strain>Large white X Landrace X Duroc</strain>
    </source>
</reference>
<dbReference type="EC" id="2.7.11.34" evidence="2"/>
<dbReference type="EMBL" id="AP009124">
    <property type="protein sequence ID" value="BAF45329.1"/>
    <property type="molecule type" value="Genomic_DNA"/>
</dbReference>
<dbReference type="RefSeq" id="XP_003122211.3">
    <property type="nucleotide sequence ID" value="XM_003122163.5"/>
</dbReference>
<dbReference type="RefSeq" id="XP_005660481.1">
    <property type="nucleotide sequence ID" value="XM_005660424.3"/>
</dbReference>
<dbReference type="RefSeq" id="XP_013849310.1">
    <property type="nucleotide sequence ID" value="XM_013993856.2"/>
</dbReference>
<dbReference type="RefSeq" id="XP_020924228.1">
    <property type="nucleotide sequence ID" value="XM_021068569.1"/>
</dbReference>
<dbReference type="RefSeq" id="XP_020924229.1">
    <property type="nucleotide sequence ID" value="XM_021068570.1"/>
</dbReference>
<dbReference type="RefSeq" id="XP_020924232.1">
    <property type="nucleotide sequence ID" value="XM_021068573.1"/>
</dbReference>
<dbReference type="RefSeq" id="XP_020924235.1">
    <property type="nucleotide sequence ID" value="XM_021068576.1"/>
</dbReference>
<dbReference type="RefSeq" id="XP_020924237.1">
    <property type="nucleotide sequence ID" value="XM_021068578.1"/>
</dbReference>
<dbReference type="SMR" id="A2BD05"/>
<dbReference type="FunCoup" id="A2BD05">
    <property type="interactions" value="87"/>
</dbReference>
<dbReference type="STRING" id="9823.ENSSSCP00000035820"/>
<dbReference type="PaxDb" id="9823-ENSSSCP00000005983"/>
<dbReference type="PeptideAtlas" id="A2BD05"/>
<dbReference type="Ensembl" id="ENSSSCT00000058361.2">
    <property type="protein sequence ID" value="ENSSSCP00000052701.1"/>
    <property type="gene ID" value="ENSSSCG00000005587.5"/>
</dbReference>
<dbReference type="Ensembl" id="ENSSSCT00015052084.1">
    <property type="protein sequence ID" value="ENSSSCP00015020795.1"/>
    <property type="gene ID" value="ENSSSCG00015038799.1"/>
</dbReference>
<dbReference type="Ensembl" id="ENSSSCT00025045186.1">
    <property type="protein sequence ID" value="ENSSSCP00025019260.1"/>
    <property type="gene ID" value="ENSSSCG00025033186.1"/>
</dbReference>
<dbReference type="Ensembl" id="ENSSSCT00030063821.1">
    <property type="protein sequence ID" value="ENSSSCP00030029221.1"/>
    <property type="gene ID" value="ENSSSCG00030045680.1"/>
</dbReference>
<dbReference type="Ensembl" id="ENSSSCT00035103043.1">
    <property type="protein sequence ID" value="ENSSSCP00035044025.1"/>
    <property type="gene ID" value="ENSSSCG00035075710.1"/>
</dbReference>
<dbReference type="Ensembl" id="ENSSSCT00040004407.1">
    <property type="protein sequence ID" value="ENSSSCP00040001404.1"/>
    <property type="gene ID" value="ENSSSCG00040003483.1"/>
</dbReference>
<dbReference type="Ensembl" id="ENSSSCT00045056815.1">
    <property type="protein sequence ID" value="ENSSSCP00045039683.1"/>
    <property type="gene ID" value="ENSSSCG00045033184.1"/>
</dbReference>
<dbReference type="Ensembl" id="ENSSSCT00050059114.1">
    <property type="protein sequence ID" value="ENSSSCP00050025370.1"/>
    <property type="gene ID" value="ENSSSCG00050043427.1"/>
</dbReference>
<dbReference type="Ensembl" id="ENSSSCT00055056215.1">
    <property type="protein sequence ID" value="ENSSSCP00055044913.1"/>
    <property type="gene ID" value="ENSSSCG00055028329.1"/>
</dbReference>
<dbReference type="Ensembl" id="ENSSSCT00060106188.1">
    <property type="protein sequence ID" value="ENSSSCP00060046844.1"/>
    <property type="gene ID" value="ENSSSCG00060077158.1"/>
</dbReference>
<dbReference type="Ensembl" id="ENSSSCT00065030351.1">
    <property type="protein sequence ID" value="ENSSSCP00065012422.1"/>
    <property type="gene ID" value="ENSSSCG00065022786.1"/>
</dbReference>
<dbReference type="Ensembl" id="ENSSSCT00070033640.1">
    <property type="protein sequence ID" value="ENSSSCP00070028075.1"/>
    <property type="gene ID" value="ENSSSCG00070017021.1"/>
</dbReference>
<dbReference type="Ensembl" id="ENSSSCT00070033654.1">
    <property type="protein sequence ID" value="ENSSSCP00070028089.1"/>
    <property type="gene ID" value="ENSSSCG00070017021.1"/>
</dbReference>
<dbReference type="Ensembl" id="ENSSSCT00070033660.1">
    <property type="protein sequence ID" value="ENSSSCP00070028094.1"/>
    <property type="gene ID" value="ENSSSCG00070017021.1"/>
</dbReference>
<dbReference type="Ensembl" id="ENSSSCT00090050580">
    <property type="protein sequence ID" value="ENSSSCP00090031512"/>
    <property type="gene ID" value="ENSSSCG00090028561"/>
</dbReference>
<dbReference type="Ensembl" id="ENSSSCT00105009320">
    <property type="protein sequence ID" value="ENSSSCP00105006814"/>
    <property type="gene ID" value="ENSSSCG00105004648"/>
</dbReference>
<dbReference type="Ensembl" id="ENSSSCT00130067373">
    <property type="protein sequence ID" value="ENSSSCP00130048347"/>
    <property type="gene ID" value="ENSSSCG00130034473"/>
</dbReference>
<dbReference type="GeneID" id="100514624"/>
<dbReference type="KEGG" id="ssc:100514624"/>
<dbReference type="CTD" id="10783"/>
<dbReference type="VGNC" id="VGNC:90678">
    <property type="gene designation" value="NEK6"/>
</dbReference>
<dbReference type="eggNOG" id="KOG0591">
    <property type="taxonomic scope" value="Eukaryota"/>
</dbReference>
<dbReference type="GeneTree" id="ENSGT00940000159990"/>
<dbReference type="HOGENOM" id="CLU_000288_63_23_1"/>
<dbReference type="InParanoid" id="A2BD05"/>
<dbReference type="OrthoDB" id="248923at2759"/>
<dbReference type="TreeFam" id="TF101021"/>
<dbReference type="Reactome" id="R-SSC-2980767">
    <property type="pathway name" value="Activation of NIMA Kinases NEK9, NEK6, NEK7"/>
</dbReference>
<dbReference type="Reactome" id="R-SSC-3301854">
    <property type="pathway name" value="Nuclear Pore Complex (NPC) Disassembly"/>
</dbReference>
<dbReference type="Reactome" id="R-SSC-9648025">
    <property type="pathway name" value="EML4 and NUDC in mitotic spindle formation"/>
</dbReference>
<dbReference type="Proteomes" id="UP000008227">
    <property type="component" value="Chromosome 1"/>
</dbReference>
<dbReference type="Proteomes" id="UP000314985">
    <property type="component" value="Chromosome 1"/>
</dbReference>
<dbReference type="Proteomes" id="UP000694570">
    <property type="component" value="Unplaced"/>
</dbReference>
<dbReference type="Proteomes" id="UP000694571">
    <property type="component" value="Unplaced"/>
</dbReference>
<dbReference type="Proteomes" id="UP000694720">
    <property type="component" value="Unplaced"/>
</dbReference>
<dbReference type="Proteomes" id="UP000694722">
    <property type="component" value="Unplaced"/>
</dbReference>
<dbReference type="Proteomes" id="UP000694723">
    <property type="component" value="Unplaced"/>
</dbReference>
<dbReference type="Proteomes" id="UP000694724">
    <property type="component" value="Unplaced"/>
</dbReference>
<dbReference type="Proteomes" id="UP000694725">
    <property type="component" value="Unplaced"/>
</dbReference>
<dbReference type="Proteomes" id="UP000694726">
    <property type="component" value="Unplaced"/>
</dbReference>
<dbReference type="Proteomes" id="UP000694727">
    <property type="component" value="Unplaced"/>
</dbReference>
<dbReference type="Proteomes" id="UP000694728">
    <property type="component" value="Unplaced"/>
</dbReference>
<dbReference type="Bgee" id="ENSSSCG00000005587">
    <property type="expression patterns" value="Expressed in liver and 46 other cell types or tissues"/>
</dbReference>
<dbReference type="ExpressionAtlas" id="A2BD05">
    <property type="expression patterns" value="baseline and differential"/>
</dbReference>
<dbReference type="GO" id="GO:0034451">
    <property type="term" value="C:centriolar satellite"/>
    <property type="evidence" value="ECO:0007669"/>
    <property type="project" value="Ensembl"/>
</dbReference>
<dbReference type="GO" id="GO:0005829">
    <property type="term" value="C:cytosol"/>
    <property type="evidence" value="ECO:0000318"/>
    <property type="project" value="GO_Central"/>
</dbReference>
<dbReference type="GO" id="GO:0016607">
    <property type="term" value="C:nuclear speck"/>
    <property type="evidence" value="ECO:0007669"/>
    <property type="project" value="UniProtKB-SubCell"/>
</dbReference>
<dbReference type="GO" id="GO:0032991">
    <property type="term" value="C:protein-containing complex"/>
    <property type="evidence" value="ECO:0007669"/>
    <property type="project" value="Ensembl"/>
</dbReference>
<dbReference type="GO" id="GO:0000922">
    <property type="term" value="C:spindle pole"/>
    <property type="evidence" value="ECO:0007669"/>
    <property type="project" value="UniProtKB-SubCell"/>
</dbReference>
<dbReference type="GO" id="GO:0005524">
    <property type="term" value="F:ATP binding"/>
    <property type="evidence" value="ECO:0007669"/>
    <property type="project" value="UniProtKB-KW"/>
</dbReference>
<dbReference type="GO" id="GO:0140297">
    <property type="term" value="F:DNA-binding transcription factor binding"/>
    <property type="evidence" value="ECO:0007669"/>
    <property type="project" value="Ensembl"/>
</dbReference>
<dbReference type="GO" id="GO:0019894">
    <property type="term" value="F:kinesin binding"/>
    <property type="evidence" value="ECO:0007669"/>
    <property type="project" value="Ensembl"/>
</dbReference>
<dbReference type="GO" id="GO:0000287">
    <property type="term" value="F:magnesium ion binding"/>
    <property type="evidence" value="ECO:0007669"/>
    <property type="project" value="Ensembl"/>
</dbReference>
<dbReference type="GO" id="GO:0019901">
    <property type="term" value="F:protein kinase binding"/>
    <property type="evidence" value="ECO:0000250"/>
    <property type="project" value="UniProtKB"/>
</dbReference>
<dbReference type="GO" id="GO:0106310">
    <property type="term" value="F:protein serine kinase activity"/>
    <property type="evidence" value="ECO:0007669"/>
    <property type="project" value="RHEA"/>
</dbReference>
<dbReference type="GO" id="GO:0004674">
    <property type="term" value="F:protein serine/threonine kinase activity"/>
    <property type="evidence" value="ECO:0000250"/>
    <property type="project" value="UniProtKB"/>
</dbReference>
<dbReference type="GO" id="GO:0001222">
    <property type="term" value="F:transcription corepressor binding"/>
    <property type="evidence" value="ECO:0007669"/>
    <property type="project" value="Ensembl"/>
</dbReference>
<dbReference type="GO" id="GO:0031625">
    <property type="term" value="F:ubiquitin protein ligase binding"/>
    <property type="evidence" value="ECO:0007669"/>
    <property type="project" value="Ensembl"/>
</dbReference>
<dbReference type="GO" id="GO:0006915">
    <property type="term" value="P:apoptotic process"/>
    <property type="evidence" value="ECO:0007669"/>
    <property type="project" value="UniProtKB-KW"/>
</dbReference>
<dbReference type="GO" id="GO:0051301">
    <property type="term" value="P:cell division"/>
    <property type="evidence" value="ECO:0007669"/>
    <property type="project" value="UniProtKB-KW"/>
</dbReference>
<dbReference type="GO" id="GO:0007059">
    <property type="term" value="P:chromosome segregation"/>
    <property type="evidence" value="ECO:0000318"/>
    <property type="project" value="GO_Central"/>
</dbReference>
<dbReference type="GO" id="GO:0046777">
    <property type="term" value="P:protein autophosphorylation"/>
    <property type="evidence" value="ECO:0000250"/>
    <property type="project" value="UniProtKB"/>
</dbReference>
<dbReference type="GO" id="GO:0006468">
    <property type="term" value="P:protein phosphorylation"/>
    <property type="evidence" value="ECO:0000250"/>
    <property type="project" value="UniProtKB"/>
</dbReference>
<dbReference type="GO" id="GO:0030071">
    <property type="term" value="P:regulation of mitotic metaphase/anaphase transition"/>
    <property type="evidence" value="ECO:0000318"/>
    <property type="project" value="GO_Central"/>
</dbReference>
<dbReference type="CDD" id="cd08228">
    <property type="entry name" value="STKc_Nek6"/>
    <property type="match status" value="1"/>
</dbReference>
<dbReference type="FunFam" id="1.10.510.10:FF:000148">
    <property type="entry name" value="Serine/threonine-protein kinase Nek7"/>
    <property type="match status" value="1"/>
</dbReference>
<dbReference type="FunFam" id="3.30.200.20:FF:000204">
    <property type="entry name" value="Serine/threonine-protein kinase Nek7"/>
    <property type="match status" value="1"/>
</dbReference>
<dbReference type="FunFam" id="3.30.200.20:FF:000240">
    <property type="entry name" value="Serine/threonine-protein kinase Nek7"/>
    <property type="match status" value="1"/>
</dbReference>
<dbReference type="Gene3D" id="3.30.200.20">
    <property type="entry name" value="Phosphorylase Kinase, domain 1"/>
    <property type="match status" value="1"/>
</dbReference>
<dbReference type="Gene3D" id="1.10.510.10">
    <property type="entry name" value="Transferase(Phosphotransferase) domain 1"/>
    <property type="match status" value="1"/>
</dbReference>
<dbReference type="InterPro" id="IPR011009">
    <property type="entry name" value="Kinase-like_dom_sf"/>
</dbReference>
<dbReference type="InterPro" id="IPR000719">
    <property type="entry name" value="Prot_kinase_dom"/>
</dbReference>
<dbReference type="InterPro" id="IPR017441">
    <property type="entry name" value="Protein_kinase_ATP_BS"/>
</dbReference>
<dbReference type="InterPro" id="IPR001245">
    <property type="entry name" value="Ser-Thr/Tyr_kinase_cat_dom"/>
</dbReference>
<dbReference type="InterPro" id="IPR008271">
    <property type="entry name" value="Ser/Thr_kinase_AS"/>
</dbReference>
<dbReference type="PANTHER" id="PTHR43289">
    <property type="entry name" value="MITOGEN-ACTIVATED PROTEIN KINASE KINASE KINASE 20-RELATED"/>
    <property type="match status" value="1"/>
</dbReference>
<dbReference type="PANTHER" id="PTHR43289:SF13">
    <property type="entry name" value="MITOGEN-ACTIVATED PROTEIN KINASE KINASE KINASE 20-RELATED"/>
    <property type="match status" value="1"/>
</dbReference>
<dbReference type="Pfam" id="PF00069">
    <property type="entry name" value="Pkinase"/>
    <property type="match status" value="1"/>
</dbReference>
<dbReference type="PIRSF" id="PIRSF000654">
    <property type="entry name" value="Integrin-linked_kinase"/>
    <property type="match status" value="1"/>
</dbReference>
<dbReference type="PRINTS" id="PR00109">
    <property type="entry name" value="TYRKINASE"/>
</dbReference>
<dbReference type="SMART" id="SM00220">
    <property type="entry name" value="S_TKc"/>
    <property type="match status" value="1"/>
</dbReference>
<dbReference type="SUPFAM" id="SSF56112">
    <property type="entry name" value="Protein kinase-like (PK-like)"/>
    <property type="match status" value="1"/>
</dbReference>
<dbReference type="PROSITE" id="PS00107">
    <property type="entry name" value="PROTEIN_KINASE_ATP"/>
    <property type="match status" value="1"/>
</dbReference>
<dbReference type="PROSITE" id="PS50011">
    <property type="entry name" value="PROTEIN_KINASE_DOM"/>
    <property type="match status" value="1"/>
</dbReference>
<dbReference type="PROSITE" id="PS00108">
    <property type="entry name" value="PROTEIN_KINASE_ST"/>
    <property type="match status" value="1"/>
</dbReference>
<accession>A2BD05</accession>
<name>NEK6_PIG</name>
<protein>
    <recommendedName>
        <fullName evidence="2">Serine/threonine-protein kinase Nek6</fullName>
        <ecNumber evidence="2">2.7.11.34</ecNumber>
    </recommendedName>
    <alternativeName>
        <fullName>Never in mitosis A-related kinase 6</fullName>
        <shortName>NimA-related protein kinase 6</shortName>
    </alternativeName>
</protein>
<gene>
    <name type="primary">NEK6</name>
</gene>
<proteinExistence type="inferred from homology"/>
<feature type="chain" id="PRO_0000311178" description="Serine/threonine-protein kinase Nek6">
    <location>
        <begin position="1"/>
        <end position="313"/>
    </location>
</feature>
<feature type="domain" description="Protein kinase" evidence="3">
    <location>
        <begin position="45"/>
        <end position="310"/>
    </location>
</feature>
<feature type="region of interest" description="Interaction with ARHGAP33, ANKRA2, CDC42, PRDX3, RAD26L, RBBP6, RPS7 and TRIP4" evidence="1">
    <location>
        <begin position="1"/>
        <end position="44"/>
    </location>
</feature>
<feature type="region of interest" description="Disordered" evidence="5">
    <location>
        <begin position="1"/>
        <end position="33"/>
    </location>
</feature>
<feature type="region of interest" description="Interaction with APBB1" evidence="1">
    <location>
        <begin position="267"/>
        <end position="270"/>
    </location>
</feature>
<feature type="active site" description="Proton acceptor" evidence="3 4">
    <location>
        <position position="172"/>
    </location>
</feature>
<feature type="binding site" evidence="3">
    <location>
        <begin position="51"/>
        <end position="59"/>
    </location>
    <ligand>
        <name>ATP</name>
        <dbReference type="ChEBI" id="CHEBI:30616"/>
    </ligand>
</feature>
<feature type="binding site" evidence="3">
    <location>
        <position position="74"/>
    </location>
    <ligand>
        <name>ATP</name>
        <dbReference type="ChEBI" id="CHEBI:30616"/>
    </ligand>
</feature>
<feature type="site" description="Autoinhibitory" evidence="1">
    <location>
        <position position="108"/>
    </location>
</feature>
<feature type="modified residue" description="Phosphoserine" evidence="2">
    <location>
        <position position="37"/>
    </location>
</feature>
<feature type="modified residue" description="Phosphothreonine" evidence="2">
    <location>
        <position position="202"/>
    </location>
</feature>
<feature type="modified residue" description="Phosphoserine; by NEK9" evidence="2">
    <location>
        <position position="206"/>
    </location>
</feature>
<feature type="modified residue" description="Phosphothreonine" evidence="2">
    <location>
        <position position="210"/>
    </location>
</feature>
<organism>
    <name type="scientific">Sus scrofa</name>
    <name type="common">Pig</name>
    <dbReference type="NCBI Taxonomy" id="9823"/>
    <lineage>
        <taxon>Eukaryota</taxon>
        <taxon>Metazoa</taxon>
        <taxon>Chordata</taxon>
        <taxon>Craniata</taxon>
        <taxon>Vertebrata</taxon>
        <taxon>Euteleostomi</taxon>
        <taxon>Mammalia</taxon>
        <taxon>Eutheria</taxon>
        <taxon>Laurasiatheria</taxon>
        <taxon>Artiodactyla</taxon>
        <taxon>Suina</taxon>
        <taxon>Suidae</taxon>
        <taxon>Sus</taxon>
    </lineage>
</organism>
<evidence type="ECO:0000250" key="1"/>
<evidence type="ECO:0000250" key="2">
    <source>
        <dbReference type="UniProtKB" id="Q9HC98"/>
    </source>
</evidence>
<evidence type="ECO:0000255" key="3">
    <source>
        <dbReference type="PROSITE-ProRule" id="PRU00159"/>
    </source>
</evidence>
<evidence type="ECO:0000255" key="4">
    <source>
        <dbReference type="PROSITE-ProRule" id="PRU10027"/>
    </source>
</evidence>
<evidence type="ECO:0000256" key="5">
    <source>
        <dbReference type="SAM" id="MobiDB-lite"/>
    </source>
</evidence>
<evidence type="ECO:0000305" key="6"/>
<comment type="function">
    <text evidence="2">Protein kinase which plays an important role in mitotic cell cycle progression. Required for chromosome segregation at metaphase-anaphase transition, robust mitotic spindle formation and cytokinesis. Phosphorylates ATF4, CIR1, PTN, RAD26L, RBBP6, RPS7, RPS6KB1, TRIP4, STAT3 and histones H1 and H3. Phosphorylates KIF11 to promote mitotic spindle formation. Involved in G2/M phase cell cycle arrest induced by DNA damage. Inhibition of activity results in apoptosis. May contribute to tumorigenesis by suppressing p53/TP53-induced cancer cell senescence (By similarity). Phosphorylates EML4 at 'Ser-144', promoting its dissociation from microtubules during mitosis which is required for efficient chromosome congression (By similarity).</text>
</comment>
<comment type="catalytic activity">
    <reaction evidence="2">
        <text>L-seryl-[protein] + ATP = O-phospho-L-seryl-[protein] + ADP + H(+)</text>
        <dbReference type="Rhea" id="RHEA:17989"/>
        <dbReference type="Rhea" id="RHEA-COMP:9863"/>
        <dbReference type="Rhea" id="RHEA-COMP:11604"/>
        <dbReference type="ChEBI" id="CHEBI:15378"/>
        <dbReference type="ChEBI" id="CHEBI:29999"/>
        <dbReference type="ChEBI" id="CHEBI:30616"/>
        <dbReference type="ChEBI" id="CHEBI:83421"/>
        <dbReference type="ChEBI" id="CHEBI:456216"/>
        <dbReference type="EC" id="2.7.11.34"/>
    </reaction>
</comment>
<comment type="catalytic activity">
    <reaction evidence="2">
        <text>L-threonyl-[protein] + ATP = O-phospho-L-threonyl-[protein] + ADP + H(+)</text>
        <dbReference type="Rhea" id="RHEA:46608"/>
        <dbReference type="Rhea" id="RHEA-COMP:11060"/>
        <dbReference type="Rhea" id="RHEA-COMP:11605"/>
        <dbReference type="ChEBI" id="CHEBI:15378"/>
        <dbReference type="ChEBI" id="CHEBI:30013"/>
        <dbReference type="ChEBI" id="CHEBI:30616"/>
        <dbReference type="ChEBI" id="CHEBI:61977"/>
        <dbReference type="ChEBI" id="CHEBI:456216"/>
        <dbReference type="EC" id="2.7.11.34"/>
    </reaction>
</comment>
<comment type="cofactor">
    <cofactor evidence="1">
        <name>Mg(2+)</name>
        <dbReference type="ChEBI" id="CHEBI:18420"/>
    </cofactor>
</comment>
<comment type="activity regulation">
    <text evidence="1">Binding to NEK9 stimulates its activity by releasing the autoinhibitory function of Tyr-108.</text>
</comment>
<comment type="subunit">
    <text evidence="1">Interacts with NEK9, predominantly in mitosis. Interacts with KIF11 (via C-terminus). Interacts with APBB1 (via WW domain). Interacts with ANKRA2, ATF4, ARHGAP33, CDC42, CIR1, PRAM1, PTN, PRDX3, PIN1, RAD26L, RBBP6, RPS7, RPS6KB1, STAT3 and TRIP4 (By similarity).</text>
</comment>
<comment type="subcellular location">
    <subcellularLocation>
        <location evidence="1">Cytoplasm</location>
    </subcellularLocation>
    <subcellularLocation>
        <location evidence="1">Nucleus</location>
    </subcellularLocation>
    <subcellularLocation>
        <location evidence="1">Nucleus speckle</location>
    </subcellularLocation>
    <subcellularLocation>
        <location evidence="1">Cytoplasm</location>
        <location evidence="1">Cytoskeleton</location>
        <location evidence="1">Microtubule organizing center</location>
        <location evidence="1">Centrosome</location>
    </subcellularLocation>
    <subcellularLocation>
        <location evidence="1">Cytoplasm</location>
        <location evidence="1">Cytoskeleton</location>
        <location evidence="1">Spindle pole</location>
    </subcellularLocation>
    <text evidence="1">Colocalizes with APBB1 at the nuclear speckles. Colocalizes with PIN1 in the nucleus. Colocalizes with ATF4, CIR1, ARHGAP33, ANKRA2, CDC42, NEK9, RAD26L, RBBP6, RPS7, TRIP4, RELB and PHF1 in the centrosome. Localizes to spindle microtubules in metaphase and anaphase and to the midbody during cytokinesis (By similarity).</text>
</comment>
<comment type="domain">
    <text evidence="1">Displays an autoinhibited conformation: Tyr-108 side chain points into the active site, interacts with the activation loop, and blocks the alphaC helix. The autoinhibitory conformation is released upon binding with NEK9 (By similarity).</text>
</comment>
<comment type="PTM">
    <text evidence="1">Autophosphorylated. Phosphorylation at Ser-206 is required for its activation. Phosphorylated upon IR or UV-induced DNA damage. Phosphorylated by CHEK1 and CHEK2. Interaction with APBB1 down-regulates phosphorylation at Thr-210 (By similarity).</text>
</comment>
<comment type="similarity">
    <text evidence="6">Belongs to the protein kinase superfamily. NEK Ser/Thr protein kinase family. NIMA subfamily.</text>
</comment>
<sequence>MAGQPSHMPHGGSPNNLCHTPGPAHPPDPQRHPNALSFRCSLADFQIEKKIGRGQFSEVYKATCLLDRKTVALKKVQIFEMMDAKARQDCVKEIGLLKQLNHPNIIKYLDSFIEDNELNIVLELADAGDLSQMIKYFKKQKRLIPERTVWKYFVQLCSAVEHMHSRRVMHRDIKPANVFITATGIVKLGDLGLGRFFSSETTAAHSLVGTPYYMSPERIHENGYNFKSDIWSLGCLLYEMAALQSPFYGDKMNLFSLCQKIEQCDYPPLPGEHYSEKLRELVSMCIYPDPNQRPDIGYVHQVARQMHVWTSST</sequence>